<gene>
    <name type="primary">PRA1G1</name>
    <name type="ordered locus">At1g55640</name>
    <name type="ORF">F20N2.7</name>
</gene>
<organism>
    <name type="scientific">Arabidopsis thaliana</name>
    <name type="common">Mouse-ear cress</name>
    <dbReference type="NCBI Taxonomy" id="3702"/>
    <lineage>
        <taxon>Eukaryota</taxon>
        <taxon>Viridiplantae</taxon>
        <taxon>Streptophyta</taxon>
        <taxon>Embryophyta</taxon>
        <taxon>Tracheophyta</taxon>
        <taxon>Spermatophyta</taxon>
        <taxon>Magnoliopsida</taxon>
        <taxon>eudicotyledons</taxon>
        <taxon>Gunneridae</taxon>
        <taxon>Pentapetalae</taxon>
        <taxon>rosids</taxon>
        <taxon>malvids</taxon>
        <taxon>Brassicales</taxon>
        <taxon>Brassicaceae</taxon>
        <taxon>Camelineae</taxon>
        <taxon>Arabidopsis</taxon>
    </lineage>
</organism>
<dbReference type="EMBL" id="AC002328">
    <property type="protein sequence ID" value="AAF79494.1"/>
    <property type="molecule type" value="Genomic_DNA"/>
</dbReference>
<dbReference type="EMBL" id="CP002684">
    <property type="protein sequence ID" value="AEE33277.1"/>
    <property type="molecule type" value="Genomic_DNA"/>
</dbReference>
<dbReference type="EMBL" id="DQ056498">
    <property type="protein sequence ID" value="AAY78655.1"/>
    <property type="molecule type" value="mRNA"/>
</dbReference>
<dbReference type="RefSeq" id="NP_175960.1">
    <property type="nucleotide sequence ID" value="NM_104440.2"/>
</dbReference>
<dbReference type="FunCoup" id="Q9ZWD1">
    <property type="interactions" value="1270"/>
</dbReference>
<dbReference type="STRING" id="3702.Q9ZWD1"/>
<dbReference type="PaxDb" id="3702-AT1G55640.1"/>
<dbReference type="EnsemblPlants" id="AT1G55640.1">
    <property type="protein sequence ID" value="AT1G55640.1"/>
    <property type="gene ID" value="AT1G55640"/>
</dbReference>
<dbReference type="GeneID" id="842013"/>
<dbReference type="Gramene" id="AT1G55640.1">
    <property type="protein sequence ID" value="AT1G55640.1"/>
    <property type="gene ID" value="AT1G55640"/>
</dbReference>
<dbReference type="KEGG" id="ath:AT1G55640"/>
<dbReference type="Araport" id="AT1G55640"/>
<dbReference type="TAIR" id="AT1G55640">
    <property type="gene designation" value="PRA1.G1"/>
</dbReference>
<dbReference type="eggNOG" id="KOG3142">
    <property type="taxonomic scope" value="Eukaryota"/>
</dbReference>
<dbReference type="HOGENOM" id="CLU_060198_2_1_1"/>
<dbReference type="InParanoid" id="Q9ZWD1"/>
<dbReference type="OMA" id="GLWLTHC"/>
<dbReference type="PhylomeDB" id="Q9ZWD1"/>
<dbReference type="PRO" id="PR:Q9ZWD1"/>
<dbReference type="Proteomes" id="UP000006548">
    <property type="component" value="Chromosome 1"/>
</dbReference>
<dbReference type="ExpressionAtlas" id="Q9ZWD1">
    <property type="expression patterns" value="baseline and differential"/>
</dbReference>
<dbReference type="GO" id="GO:0005783">
    <property type="term" value="C:endoplasmic reticulum"/>
    <property type="evidence" value="ECO:0000314"/>
    <property type="project" value="TAIR"/>
</dbReference>
<dbReference type="GO" id="GO:0010008">
    <property type="term" value="C:endosome membrane"/>
    <property type="evidence" value="ECO:0007669"/>
    <property type="project" value="UniProtKB-SubCell"/>
</dbReference>
<dbReference type="GO" id="GO:0016192">
    <property type="term" value="P:vesicle-mediated transport"/>
    <property type="evidence" value="ECO:0000314"/>
    <property type="project" value="TAIR"/>
</dbReference>
<dbReference type="InterPro" id="IPR004895">
    <property type="entry name" value="Prenylated_rab_accept_PRA1"/>
</dbReference>
<dbReference type="PANTHER" id="PTHR19317:SF53">
    <property type="entry name" value="PRA1 FAMILY PROTEIN G1"/>
    <property type="match status" value="1"/>
</dbReference>
<dbReference type="PANTHER" id="PTHR19317">
    <property type="entry name" value="PRENYLATED RAB ACCEPTOR 1-RELATED"/>
    <property type="match status" value="1"/>
</dbReference>
<dbReference type="Pfam" id="PF03208">
    <property type="entry name" value="PRA1"/>
    <property type="match status" value="1"/>
</dbReference>
<name>PR1G1_ARATH</name>
<reference key="1">
    <citation type="journal article" date="2000" name="Nature">
        <title>Sequence and analysis of chromosome 1 of the plant Arabidopsis thaliana.</title>
        <authorList>
            <person name="Theologis A."/>
            <person name="Ecker J.R."/>
            <person name="Palm C.J."/>
            <person name="Federspiel N.A."/>
            <person name="Kaul S."/>
            <person name="White O."/>
            <person name="Alonso J."/>
            <person name="Altafi H."/>
            <person name="Araujo R."/>
            <person name="Bowman C.L."/>
            <person name="Brooks S.Y."/>
            <person name="Buehler E."/>
            <person name="Chan A."/>
            <person name="Chao Q."/>
            <person name="Chen H."/>
            <person name="Cheuk R.F."/>
            <person name="Chin C.W."/>
            <person name="Chung M.K."/>
            <person name="Conn L."/>
            <person name="Conway A.B."/>
            <person name="Conway A.R."/>
            <person name="Creasy T.H."/>
            <person name="Dewar K."/>
            <person name="Dunn P."/>
            <person name="Etgu P."/>
            <person name="Feldblyum T.V."/>
            <person name="Feng J.-D."/>
            <person name="Fong B."/>
            <person name="Fujii C.Y."/>
            <person name="Gill J.E."/>
            <person name="Goldsmith A.D."/>
            <person name="Haas B."/>
            <person name="Hansen N.F."/>
            <person name="Hughes B."/>
            <person name="Huizar L."/>
            <person name="Hunter J.L."/>
            <person name="Jenkins J."/>
            <person name="Johnson-Hopson C."/>
            <person name="Khan S."/>
            <person name="Khaykin E."/>
            <person name="Kim C.J."/>
            <person name="Koo H.L."/>
            <person name="Kremenetskaia I."/>
            <person name="Kurtz D.B."/>
            <person name="Kwan A."/>
            <person name="Lam B."/>
            <person name="Langin-Hooper S."/>
            <person name="Lee A."/>
            <person name="Lee J.M."/>
            <person name="Lenz C.A."/>
            <person name="Li J.H."/>
            <person name="Li Y.-P."/>
            <person name="Lin X."/>
            <person name="Liu S.X."/>
            <person name="Liu Z.A."/>
            <person name="Luros J.S."/>
            <person name="Maiti R."/>
            <person name="Marziali A."/>
            <person name="Militscher J."/>
            <person name="Miranda M."/>
            <person name="Nguyen M."/>
            <person name="Nierman W.C."/>
            <person name="Osborne B.I."/>
            <person name="Pai G."/>
            <person name="Peterson J."/>
            <person name="Pham P.K."/>
            <person name="Rizzo M."/>
            <person name="Rooney T."/>
            <person name="Rowley D."/>
            <person name="Sakano H."/>
            <person name="Salzberg S.L."/>
            <person name="Schwartz J.R."/>
            <person name="Shinn P."/>
            <person name="Southwick A.M."/>
            <person name="Sun H."/>
            <person name="Tallon L.J."/>
            <person name="Tambunga G."/>
            <person name="Toriumi M.J."/>
            <person name="Town C.D."/>
            <person name="Utterback T."/>
            <person name="Van Aken S."/>
            <person name="Vaysberg M."/>
            <person name="Vysotskaia V.S."/>
            <person name="Walker M."/>
            <person name="Wu D."/>
            <person name="Yu G."/>
            <person name="Fraser C.M."/>
            <person name="Venter J.C."/>
            <person name="Davis R.W."/>
        </authorList>
    </citation>
    <scope>NUCLEOTIDE SEQUENCE [LARGE SCALE GENOMIC DNA]</scope>
    <source>
        <strain>cv. Columbia</strain>
    </source>
</reference>
<reference key="2">
    <citation type="journal article" date="2017" name="Plant J.">
        <title>Araport11: a complete reannotation of the Arabidopsis thaliana reference genome.</title>
        <authorList>
            <person name="Cheng C.Y."/>
            <person name="Krishnakumar V."/>
            <person name="Chan A.P."/>
            <person name="Thibaud-Nissen F."/>
            <person name="Schobel S."/>
            <person name="Town C.D."/>
        </authorList>
    </citation>
    <scope>GENOME REANNOTATION</scope>
    <source>
        <strain>cv. Columbia</strain>
    </source>
</reference>
<reference key="3">
    <citation type="submission" date="2005-05" db="EMBL/GenBank/DDBJ databases">
        <authorList>
            <person name="Underwood B.A."/>
            <person name="Xiao Y.-L."/>
            <person name="Moskal W.A. Jr."/>
            <person name="Monaghan E.L."/>
            <person name="Wang W."/>
            <person name="Redman J.C."/>
            <person name="Wu H.C."/>
            <person name="Utterback T."/>
            <person name="Town C.D."/>
        </authorList>
    </citation>
    <scope>NUCLEOTIDE SEQUENCE [LARGE SCALE MRNA]</scope>
    <source>
        <strain>cv. Columbia</strain>
    </source>
</reference>
<reference key="4">
    <citation type="journal article" date="2008" name="Plant Physiol.">
        <title>The PRA1 gene family in Arabidopsis.</title>
        <authorList>
            <person name="Alvim Kamei C.L."/>
            <person name="Boruc J."/>
            <person name="Vandepoele K."/>
            <person name="Van den Daele H."/>
            <person name="Maes S."/>
            <person name="Russinova E."/>
            <person name="Inze D."/>
            <person name="de Veylder L."/>
        </authorList>
    </citation>
    <scope>SUBCELLULAR LOCATION</scope>
    <scope>TISSUE SPECIFICITY</scope>
    <scope>GENE FAMILY</scope>
    <scope>NOMENCLATURE</scope>
</reference>
<protein>
    <recommendedName>
        <fullName>PRA1 family protein G1</fullName>
        <shortName>AtPRA1.G1</shortName>
    </recommendedName>
</protein>
<proteinExistence type="evidence at transcript level"/>
<keyword id="KW-0967">Endosome</keyword>
<keyword id="KW-0472">Membrane</keyword>
<keyword id="KW-1185">Reference proteome</keyword>
<keyword id="KW-0812">Transmembrane</keyword>
<keyword id="KW-1133">Transmembrane helix</keyword>
<keyword id="KW-0813">Transport</keyword>
<sequence length="187" mass="20782">MLAPGESVLIPAEEISLSAGDVISLSVHNLIASVSSYRPWWSEFLAFGSIDRPSSFSPAVSRVKLNLHHFAVNYVLLTAASITLFLIGDPMALVTVASFVAMWLLLYFYRDHPLVLYGRHISDRVIVFGLILGSLWALWFINSLQCLILGVVTSVLLCLVHAIIRNSDDLFVQEKDVVVPSNFLHWS</sequence>
<accession>Q9ZWD1</accession>
<evidence type="ECO:0000250" key="1"/>
<evidence type="ECO:0000255" key="2"/>
<evidence type="ECO:0000269" key="3">
    <source>
    </source>
</evidence>
<evidence type="ECO:0000305" key="4"/>
<comment type="function">
    <text evidence="1">May be involved in both secretory and endocytic intracellular trafficking in the endosomal/prevacuolar compartments.</text>
</comment>
<comment type="subcellular location">
    <subcellularLocation>
        <location evidence="3">Endosome membrane</location>
        <topology evidence="3">Multi-pass membrane protein</topology>
    </subcellularLocation>
</comment>
<comment type="tissue specificity">
    <text evidence="3">Expressed in roots and lateral roots.</text>
</comment>
<comment type="similarity">
    <text evidence="4">Belongs to the PRA1 family.</text>
</comment>
<feature type="chain" id="PRO_0000352263" description="PRA1 family protein G1">
    <location>
        <begin position="1"/>
        <end position="187"/>
    </location>
</feature>
<feature type="transmembrane region" description="Helical" evidence="2">
    <location>
        <begin position="84"/>
        <end position="104"/>
    </location>
</feature>
<feature type="transmembrane region" description="Helical" evidence="2">
    <location>
        <begin position="125"/>
        <end position="145"/>
    </location>
</feature>
<feature type="transmembrane region" description="Helical" evidence="2">
    <location>
        <begin position="146"/>
        <end position="166"/>
    </location>
</feature>